<gene>
    <name type="primary">Ddc</name>
</gene>
<accession>O88533</accession>
<proteinExistence type="evidence at protein level"/>
<keyword id="KW-0007">Acetylation</keyword>
<keyword id="KW-0127">Catecholamine biosynthesis</keyword>
<keyword id="KW-0210">Decarboxylase</keyword>
<keyword id="KW-0456">Lyase</keyword>
<keyword id="KW-0663">Pyridoxal phosphate</keyword>
<keyword id="KW-1185">Reference proteome</keyword>
<keyword id="KW-0677">Repeat</keyword>
<name>DDC_MOUSE</name>
<sequence length="480" mass="53874">MDSREFRRRGKEMVDYIADYLDGIEGRPVYPDVEPGYLRPLIPATAPQEPETYEDIIKDIEKIIMPGVTHWHSPYFFAYFPTASSYPAMLADMLCGAIGCIGFSWAASPACTELETVMMDWLGKMLELPEAFLAGRAGEGGGVIQGSASEATLVALLAARTKVIRQLQAASPEFTQAAIMEKLVAYTSDQAHSSVERAGLIGGIKLKAVPSDGNFSMRASALREALERDKAAGLIPFFVVATLGTTSCCSFDNLLEVGPICNQEGVWLHIDAAYAGSAFICPEFRYLLNGVEFADSFNFNPHKWLLVNFDCSAMWVKRRTDLTGAFNMDPVYLKHSHQDSGFITDYRHWQIPLGRRFRSLKMWFVFRMYGVKGLQAYIRKHVELSHEFESLVRQDPRFEICTEVILGLVCFRLKGSNELNETLLQRINSAKKIHLVPCRLRDKFVLRFAVCARTVESAHVQLAWEHISDLASSVLRAEKE</sequence>
<organism>
    <name type="scientific">Mus musculus</name>
    <name type="common">Mouse</name>
    <dbReference type="NCBI Taxonomy" id="10090"/>
    <lineage>
        <taxon>Eukaryota</taxon>
        <taxon>Metazoa</taxon>
        <taxon>Chordata</taxon>
        <taxon>Craniata</taxon>
        <taxon>Vertebrata</taxon>
        <taxon>Euteleostomi</taxon>
        <taxon>Mammalia</taxon>
        <taxon>Eutheria</taxon>
        <taxon>Euarchontoglires</taxon>
        <taxon>Glires</taxon>
        <taxon>Rodentia</taxon>
        <taxon>Myomorpha</taxon>
        <taxon>Muroidea</taxon>
        <taxon>Muridae</taxon>
        <taxon>Murinae</taxon>
        <taxon>Mus</taxon>
        <taxon>Mus</taxon>
    </lineage>
</organism>
<dbReference type="EC" id="4.1.1.28" evidence="2"/>
<dbReference type="EMBL" id="AF071068">
    <property type="protein sequence ID" value="AAC25566.1"/>
    <property type="molecule type" value="mRNA"/>
</dbReference>
<dbReference type="CCDS" id="CCDS24439.1"/>
<dbReference type="RefSeq" id="NP_001177377.1">
    <property type="nucleotide sequence ID" value="NM_001190448.1"/>
</dbReference>
<dbReference type="RefSeq" id="NP_001404386.1">
    <property type="nucleotide sequence ID" value="NM_001417457.1"/>
</dbReference>
<dbReference type="RefSeq" id="NP_001404387.1">
    <property type="nucleotide sequence ID" value="NM_001417458.1"/>
</dbReference>
<dbReference type="RefSeq" id="NP_001404388.1">
    <property type="nucleotide sequence ID" value="NM_001417459.1"/>
</dbReference>
<dbReference type="RefSeq" id="NP_057881.1">
    <property type="nucleotide sequence ID" value="NM_016672.5"/>
</dbReference>
<dbReference type="RefSeq" id="XP_006514550.1">
    <property type="nucleotide sequence ID" value="XM_006514487.3"/>
</dbReference>
<dbReference type="RefSeq" id="XP_006514551.1">
    <property type="nucleotide sequence ID" value="XM_006514488.3"/>
</dbReference>
<dbReference type="RefSeq" id="XP_006514552.1">
    <property type="nucleotide sequence ID" value="XM_006514489.2"/>
</dbReference>
<dbReference type="SMR" id="O88533"/>
<dbReference type="BioGRID" id="199075">
    <property type="interactions" value="1"/>
</dbReference>
<dbReference type="FunCoup" id="O88533">
    <property type="interactions" value="149"/>
</dbReference>
<dbReference type="IntAct" id="O88533">
    <property type="interactions" value="1"/>
</dbReference>
<dbReference type="STRING" id="10090.ENSMUSP00000136467"/>
<dbReference type="BindingDB" id="O88533"/>
<dbReference type="ChEMBL" id="CHEMBL4230"/>
<dbReference type="GlyGen" id="O88533">
    <property type="glycosylation" value="1 site, 1 N-linked glycan (1 site)"/>
</dbReference>
<dbReference type="iPTMnet" id="O88533"/>
<dbReference type="PhosphoSitePlus" id="O88533"/>
<dbReference type="SwissPalm" id="O88533"/>
<dbReference type="jPOST" id="O88533"/>
<dbReference type="PaxDb" id="10090-ENSMUSP00000136467"/>
<dbReference type="PeptideAtlas" id="O88533"/>
<dbReference type="ProteomicsDB" id="277967"/>
<dbReference type="Antibodypedia" id="2793">
    <property type="antibodies" value="523 antibodies from 46 providers"/>
</dbReference>
<dbReference type="DNASU" id="13195"/>
<dbReference type="Ensembl" id="ENSMUST00000066237.10">
    <property type="protein sequence ID" value="ENSMUSP00000068525.4"/>
    <property type="gene ID" value="ENSMUSG00000020182.17"/>
</dbReference>
<dbReference type="Ensembl" id="ENSMUST00000109659.9">
    <property type="protein sequence ID" value="ENSMUSP00000105286.3"/>
    <property type="gene ID" value="ENSMUSG00000020182.17"/>
</dbReference>
<dbReference type="Ensembl" id="ENSMUST00000178704.8">
    <property type="protein sequence ID" value="ENSMUSP00000136467.2"/>
    <property type="gene ID" value="ENSMUSG00000020182.17"/>
</dbReference>
<dbReference type="GeneID" id="13195"/>
<dbReference type="KEGG" id="mmu:13195"/>
<dbReference type="UCSC" id="uc007iaw.2">
    <property type="organism name" value="mouse"/>
</dbReference>
<dbReference type="AGR" id="MGI:94876"/>
<dbReference type="CTD" id="1644"/>
<dbReference type="MGI" id="MGI:94876">
    <property type="gene designation" value="Ddc"/>
</dbReference>
<dbReference type="VEuPathDB" id="HostDB:ENSMUSG00000020182"/>
<dbReference type="eggNOG" id="KOG0628">
    <property type="taxonomic scope" value="Eukaryota"/>
</dbReference>
<dbReference type="GeneTree" id="ENSGT00940000156004"/>
<dbReference type="HOGENOM" id="CLU_011856_3_0_1"/>
<dbReference type="InParanoid" id="O88533"/>
<dbReference type="OMA" id="IPFEMEY"/>
<dbReference type="OrthoDB" id="639767at2759"/>
<dbReference type="PhylomeDB" id="O88533"/>
<dbReference type="TreeFam" id="TF313863"/>
<dbReference type="BRENDA" id="4.1.1.28">
    <property type="organism ID" value="3474"/>
</dbReference>
<dbReference type="Reactome" id="R-MMU-209905">
    <property type="pathway name" value="Catecholamine biosynthesis"/>
</dbReference>
<dbReference type="Reactome" id="R-MMU-209931">
    <property type="pathway name" value="Serotonin and melatonin biosynthesis"/>
</dbReference>
<dbReference type="UniPathway" id="UPA00747">
    <property type="reaction ID" value="UER00734"/>
</dbReference>
<dbReference type="BioGRID-ORCS" id="13195">
    <property type="hits" value="2 hits in 77 CRISPR screens"/>
</dbReference>
<dbReference type="ChiTaRS" id="Ddc">
    <property type="organism name" value="mouse"/>
</dbReference>
<dbReference type="PRO" id="PR:O88533"/>
<dbReference type="Proteomes" id="UP000000589">
    <property type="component" value="Chromosome 11"/>
</dbReference>
<dbReference type="RNAct" id="O88533">
    <property type="molecule type" value="protein"/>
</dbReference>
<dbReference type="Bgee" id="ENSMUSG00000020182">
    <property type="expression patterns" value="Expressed in superior cervical ganglion and 218 other cell types or tissues"/>
</dbReference>
<dbReference type="ExpressionAtlas" id="O88533">
    <property type="expression patterns" value="baseline and differential"/>
</dbReference>
<dbReference type="GO" id="GO:0005737">
    <property type="term" value="C:cytoplasm"/>
    <property type="evidence" value="ECO:0000314"/>
    <property type="project" value="MGI"/>
</dbReference>
<dbReference type="GO" id="GO:0036467">
    <property type="term" value="F:5-hydroxy-L-tryptophan decarboxylase activity"/>
    <property type="evidence" value="ECO:0007669"/>
    <property type="project" value="Ensembl"/>
</dbReference>
<dbReference type="GO" id="GO:0004058">
    <property type="term" value="F:aromatic-L-amino-acid decarboxylase activity"/>
    <property type="evidence" value="ECO:0000314"/>
    <property type="project" value="MGI"/>
</dbReference>
<dbReference type="GO" id="GO:0019899">
    <property type="term" value="F:enzyme binding"/>
    <property type="evidence" value="ECO:0007669"/>
    <property type="project" value="Ensembl"/>
</dbReference>
<dbReference type="GO" id="GO:0036468">
    <property type="term" value="F:L-dopa decarboxylase activity"/>
    <property type="evidence" value="ECO:0007669"/>
    <property type="project" value="Ensembl"/>
</dbReference>
<dbReference type="GO" id="GO:0030170">
    <property type="term" value="F:pyridoxal phosphate binding"/>
    <property type="evidence" value="ECO:0007669"/>
    <property type="project" value="InterPro"/>
</dbReference>
<dbReference type="GO" id="GO:0006520">
    <property type="term" value="P:amino acid metabolic process"/>
    <property type="evidence" value="ECO:0007669"/>
    <property type="project" value="InterPro"/>
</dbReference>
<dbReference type="GO" id="GO:0019752">
    <property type="term" value="P:carboxylic acid metabolic process"/>
    <property type="evidence" value="ECO:0007669"/>
    <property type="project" value="InterPro"/>
</dbReference>
<dbReference type="GO" id="GO:0042416">
    <property type="term" value="P:dopamine biosynthetic process"/>
    <property type="evidence" value="ECO:0007669"/>
    <property type="project" value="UniProtKB-UniPathway"/>
</dbReference>
<dbReference type="GO" id="GO:0010467">
    <property type="term" value="P:gene expression"/>
    <property type="evidence" value="ECO:0000315"/>
    <property type="project" value="MGI"/>
</dbReference>
<dbReference type="GO" id="GO:0001822">
    <property type="term" value="P:kidney development"/>
    <property type="evidence" value="ECO:0000315"/>
    <property type="project" value="MGI"/>
</dbReference>
<dbReference type="GO" id="GO:0009636">
    <property type="term" value="P:response to toxic substance"/>
    <property type="evidence" value="ECO:0000314"/>
    <property type="project" value="MGI"/>
</dbReference>
<dbReference type="CDD" id="cd06450">
    <property type="entry name" value="DOPA_deC_like"/>
    <property type="match status" value="1"/>
</dbReference>
<dbReference type="FunFam" id="1.20.1340.10:FF:000001">
    <property type="entry name" value="Histidine decarboxylase"/>
    <property type="match status" value="1"/>
</dbReference>
<dbReference type="FunFam" id="3.40.640.10:FF:000025">
    <property type="entry name" value="Histidine decarboxylase"/>
    <property type="match status" value="1"/>
</dbReference>
<dbReference type="FunFam" id="3.90.1150.10:FF:000018">
    <property type="entry name" value="Histidine decarboxylase"/>
    <property type="match status" value="1"/>
</dbReference>
<dbReference type="Gene3D" id="3.90.1150.10">
    <property type="entry name" value="Aspartate Aminotransferase, domain 1"/>
    <property type="match status" value="1"/>
</dbReference>
<dbReference type="Gene3D" id="1.20.1340.10">
    <property type="entry name" value="dopa decarboxylase, N-terminal domain"/>
    <property type="match status" value="1"/>
</dbReference>
<dbReference type="Gene3D" id="3.40.640.10">
    <property type="entry name" value="Type I PLP-dependent aspartate aminotransferase-like (Major domain)"/>
    <property type="match status" value="1"/>
</dbReference>
<dbReference type="InterPro" id="IPR010977">
    <property type="entry name" value="Aromatic_deC"/>
</dbReference>
<dbReference type="InterPro" id="IPR002129">
    <property type="entry name" value="PyrdxlP-dep_de-COase"/>
</dbReference>
<dbReference type="InterPro" id="IPR015424">
    <property type="entry name" value="PyrdxlP-dep_Trfase"/>
</dbReference>
<dbReference type="InterPro" id="IPR015421">
    <property type="entry name" value="PyrdxlP-dep_Trfase_major"/>
</dbReference>
<dbReference type="InterPro" id="IPR015422">
    <property type="entry name" value="PyrdxlP-dep_Trfase_small"/>
</dbReference>
<dbReference type="InterPro" id="IPR021115">
    <property type="entry name" value="Pyridoxal-P_BS"/>
</dbReference>
<dbReference type="PANTHER" id="PTHR11999:SF167">
    <property type="entry name" value="AROMATIC-L-AMINO-ACID DECARBOXYLASE"/>
    <property type="match status" value="1"/>
</dbReference>
<dbReference type="PANTHER" id="PTHR11999">
    <property type="entry name" value="GROUP II PYRIDOXAL-5-PHOSPHATE DECARBOXYLASE"/>
    <property type="match status" value="1"/>
</dbReference>
<dbReference type="Pfam" id="PF00282">
    <property type="entry name" value="Pyridoxal_deC"/>
    <property type="match status" value="1"/>
</dbReference>
<dbReference type="PRINTS" id="PR00800">
    <property type="entry name" value="YHDCRBOXLASE"/>
</dbReference>
<dbReference type="SUPFAM" id="SSF53383">
    <property type="entry name" value="PLP-dependent transferases"/>
    <property type="match status" value="1"/>
</dbReference>
<dbReference type="PROSITE" id="PS00392">
    <property type="entry name" value="DDC_GAD_HDC_YDC"/>
    <property type="match status" value="1"/>
</dbReference>
<feature type="chain" id="PRO_0000146940" description="Aromatic-L-amino-acid decarboxylase">
    <location>
        <begin position="1"/>
        <end position="480"/>
    </location>
</feature>
<feature type="repeat" description="1">
    <location>
        <begin position="58"/>
        <end position="115"/>
    </location>
</feature>
<feature type="repeat" description="2">
    <location>
        <begin position="118"/>
        <end position="178"/>
    </location>
</feature>
<feature type="region of interest" description="2 X approximate tandem repeats">
    <location>
        <begin position="58"/>
        <end position="178"/>
    </location>
</feature>
<feature type="binding site" evidence="2">
    <location>
        <position position="82"/>
    </location>
    <ligand>
        <name>substrate</name>
    </ligand>
</feature>
<feature type="binding site" evidence="1">
    <location>
        <position position="148"/>
    </location>
    <ligand>
        <name>pyridoxal 5'-phosphate</name>
        <dbReference type="ChEBI" id="CHEBI:597326"/>
    </ligand>
</feature>
<feature type="binding site" evidence="1">
    <location>
        <position position="149"/>
    </location>
    <ligand>
        <name>pyridoxal 5'-phosphate</name>
        <dbReference type="ChEBI" id="CHEBI:597326"/>
    </ligand>
</feature>
<feature type="binding site" evidence="2">
    <location>
        <position position="192"/>
    </location>
    <ligand>
        <name>substrate</name>
    </ligand>
</feature>
<feature type="binding site" evidence="1">
    <location>
        <position position="246"/>
    </location>
    <ligand>
        <name>pyridoxal 5'-phosphate</name>
        <dbReference type="ChEBI" id="CHEBI:597326"/>
    </ligand>
</feature>
<feature type="binding site" evidence="1">
    <location>
        <position position="300"/>
    </location>
    <ligand>
        <name>pyridoxal 5'-phosphate</name>
        <dbReference type="ChEBI" id="CHEBI:597326"/>
    </ligand>
</feature>
<feature type="modified residue" description="N-acetylmethionine" evidence="2">
    <location>
        <position position="1"/>
    </location>
</feature>
<feature type="modified residue" description="N6-(pyridoxal phosphate)lysine" evidence="2">
    <location>
        <position position="303"/>
    </location>
</feature>
<comment type="function">
    <text evidence="2">Catalyzes the decarboxylation of L-3,4-dihydroxyphenylalanine (DOPA) to dopamine and L-5-hydroxytryptophan to serotonin.</text>
</comment>
<comment type="catalytic activity">
    <reaction evidence="2">
        <text>L-dopa + H(+) = dopamine + CO2</text>
        <dbReference type="Rhea" id="RHEA:12272"/>
        <dbReference type="ChEBI" id="CHEBI:15378"/>
        <dbReference type="ChEBI" id="CHEBI:16526"/>
        <dbReference type="ChEBI" id="CHEBI:57504"/>
        <dbReference type="ChEBI" id="CHEBI:59905"/>
        <dbReference type="EC" id="4.1.1.28"/>
    </reaction>
</comment>
<comment type="catalytic activity">
    <reaction evidence="2">
        <text>5-hydroxy-L-tryptophan + H(+) = serotonin + CO2</text>
        <dbReference type="Rhea" id="RHEA:18533"/>
        <dbReference type="ChEBI" id="CHEBI:15378"/>
        <dbReference type="ChEBI" id="CHEBI:16526"/>
        <dbReference type="ChEBI" id="CHEBI:58266"/>
        <dbReference type="ChEBI" id="CHEBI:350546"/>
        <dbReference type="EC" id="4.1.1.28"/>
    </reaction>
</comment>
<comment type="cofactor">
    <cofactor evidence="1">
        <name>pyridoxal 5'-phosphate</name>
        <dbReference type="ChEBI" id="CHEBI:597326"/>
    </cofactor>
</comment>
<comment type="pathway">
    <text evidence="2">Catecholamine biosynthesis; dopamine biosynthesis; dopamine from L-tyrosine: step 2/2.</text>
</comment>
<comment type="subunit">
    <text evidence="1">Homodimer.</text>
</comment>
<comment type="similarity">
    <text evidence="3">Belongs to the group II decarboxylase family.</text>
</comment>
<reference key="1">
    <citation type="submission" date="1998-06" db="EMBL/GenBank/DDBJ databases">
        <title>Cloning of mouse brain aromatic-L-amino-acid decarboxylase cDNA.</title>
        <authorList>
            <person name="Duchemin A.M."/>
            <person name="Quach T.T."/>
            <person name="Gudehithlu K.F."/>
            <person name="Hadjiconstantinou M."/>
            <person name="Neff N.H."/>
        </authorList>
    </citation>
    <scope>NUCLEOTIDE SEQUENCE [MRNA]</scope>
    <source>
        <strain>Swiss Webster</strain>
    </source>
</reference>
<reference key="2">
    <citation type="journal article" date="2010" name="Cell">
        <title>A tissue-specific atlas of mouse protein phosphorylation and expression.</title>
        <authorList>
            <person name="Huttlin E.L."/>
            <person name="Jedrychowski M.P."/>
            <person name="Elias J.E."/>
            <person name="Goswami T."/>
            <person name="Rad R."/>
            <person name="Beausoleil S.A."/>
            <person name="Villen J."/>
            <person name="Haas W."/>
            <person name="Sowa M.E."/>
            <person name="Gygi S.P."/>
        </authorList>
    </citation>
    <scope>IDENTIFICATION BY MASS SPECTROMETRY [LARGE SCALE ANALYSIS]</scope>
    <source>
        <tissue>Brain</tissue>
        <tissue>Heart</tissue>
        <tissue>Kidney</tissue>
        <tissue>Liver</tissue>
    </source>
</reference>
<protein>
    <recommendedName>
        <fullName>Aromatic-L-amino-acid decarboxylase</fullName>
        <shortName>AADC</shortName>
        <ecNumber evidence="2">4.1.1.28</ecNumber>
    </recommendedName>
    <alternativeName>
        <fullName>DOPA decarboxylase</fullName>
        <shortName>DDC</shortName>
    </alternativeName>
</protein>
<evidence type="ECO:0000250" key="1">
    <source>
        <dbReference type="UniProtKB" id="P20711"/>
    </source>
</evidence>
<evidence type="ECO:0000250" key="2">
    <source>
        <dbReference type="UniProtKB" id="P80041"/>
    </source>
</evidence>
<evidence type="ECO:0000305" key="3"/>